<proteinExistence type="inferred from homology"/>
<name>COX2_BRAHY</name>
<gene>
    <name type="primary">MT-CO2</name>
    <name type="synonym">COII</name>
    <name type="synonym">COXII</name>
    <name type="synonym">MTCO2</name>
</gene>
<evidence type="ECO:0000250" key="1">
    <source>
        <dbReference type="UniProtKB" id="P00403"/>
    </source>
</evidence>
<evidence type="ECO:0000250" key="2">
    <source>
        <dbReference type="UniProtKB" id="P00410"/>
    </source>
</evidence>
<evidence type="ECO:0000250" key="3">
    <source>
        <dbReference type="UniProtKB" id="P68530"/>
    </source>
</evidence>
<evidence type="ECO:0000305" key="4"/>
<dbReference type="EC" id="7.1.1.9"/>
<dbReference type="EMBL" id="AF216253">
    <property type="protein sequence ID" value="AAG00377.1"/>
    <property type="molecule type" value="Genomic_DNA"/>
</dbReference>
<dbReference type="GO" id="GO:0005743">
    <property type="term" value="C:mitochondrial inner membrane"/>
    <property type="evidence" value="ECO:0007669"/>
    <property type="project" value="UniProtKB-SubCell"/>
</dbReference>
<dbReference type="GO" id="GO:0045277">
    <property type="term" value="C:respiratory chain complex IV"/>
    <property type="evidence" value="ECO:0000250"/>
    <property type="project" value="UniProtKB"/>
</dbReference>
<dbReference type="GO" id="GO:0005507">
    <property type="term" value="F:copper ion binding"/>
    <property type="evidence" value="ECO:0007669"/>
    <property type="project" value="InterPro"/>
</dbReference>
<dbReference type="GO" id="GO:0004129">
    <property type="term" value="F:cytochrome-c oxidase activity"/>
    <property type="evidence" value="ECO:0007669"/>
    <property type="project" value="UniProtKB-EC"/>
</dbReference>
<dbReference type="GO" id="GO:0042773">
    <property type="term" value="P:ATP synthesis coupled electron transport"/>
    <property type="evidence" value="ECO:0007669"/>
    <property type="project" value="TreeGrafter"/>
</dbReference>
<dbReference type="CDD" id="cd13912">
    <property type="entry name" value="CcO_II_C"/>
    <property type="match status" value="1"/>
</dbReference>
<dbReference type="FunFam" id="1.10.287.90:FF:000001">
    <property type="entry name" value="Cytochrome c oxidase subunit 2"/>
    <property type="match status" value="1"/>
</dbReference>
<dbReference type="FunFam" id="2.60.40.420:FF:000001">
    <property type="entry name" value="Cytochrome c oxidase subunit 2"/>
    <property type="match status" value="1"/>
</dbReference>
<dbReference type="Gene3D" id="1.10.287.90">
    <property type="match status" value="1"/>
</dbReference>
<dbReference type="Gene3D" id="2.60.40.420">
    <property type="entry name" value="Cupredoxins - blue copper proteins"/>
    <property type="match status" value="1"/>
</dbReference>
<dbReference type="InterPro" id="IPR045187">
    <property type="entry name" value="CcO_II"/>
</dbReference>
<dbReference type="InterPro" id="IPR002429">
    <property type="entry name" value="CcO_II-like_C"/>
</dbReference>
<dbReference type="InterPro" id="IPR034210">
    <property type="entry name" value="CcO_II_C"/>
</dbReference>
<dbReference type="InterPro" id="IPR001505">
    <property type="entry name" value="Copper_CuA"/>
</dbReference>
<dbReference type="InterPro" id="IPR008972">
    <property type="entry name" value="Cupredoxin"/>
</dbReference>
<dbReference type="InterPro" id="IPR011759">
    <property type="entry name" value="Cyt_c_oxidase_su2_TM_dom"/>
</dbReference>
<dbReference type="InterPro" id="IPR036257">
    <property type="entry name" value="Cyt_c_oxidase_su2_TM_sf"/>
</dbReference>
<dbReference type="PANTHER" id="PTHR22888:SF9">
    <property type="entry name" value="CYTOCHROME C OXIDASE SUBUNIT 2"/>
    <property type="match status" value="1"/>
</dbReference>
<dbReference type="PANTHER" id="PTHR22888">
    <property type="entry name" value="CYTOCHROME C OXIDASE, SUBUNIT II"/>
    <property type="match status" value="1"/>
</dbReference>
<dbReference type="Pfam" id="PF00116">
    <property type="entry name" value="COX2"/>
    <property type="match status" value="1"/>
</dbReference>
<dbReference type="Pfam" id="PF02790">
    <property type="entry name" value="COX2_TM"/>
    <property type="match status" value="1"/>
</dbReference>
<dbReference type="PRINTS" id="PR01166">
    <property type="entry name" value="CYCOXIDASEII"/>
</dbReference>
<dbReference type="SUPFAM" id="SSF49503">
    <property type="entry name" value="Cupredoxins"/>
    <property type="match status" value="1"/>
</dbReference>
<dbReference type="SUPFAM" id="SSF81464">
    <property type="entry name" value="Cytochrome c oxidase subunit II-like, transmembrane region"/>
    <property type="match status" value="1"/>
</dbReference>
<dbReference type="PROSITE" id="PS00078">
    <property type="entry name" value="COX2"/>
    <property type="match status" value="1"/>
</dbReference>
<dbReference type="PROSITE" id="PS50857">
    <property type="entry name" value="COX2_CUA"/>
    <property type="match status" value="1"/>
</dbReference>
<dbReference type="PROSITE" id="PS50999">
    <property type="entry name" value="COX2_TM"/>
    <property type="match status" value="1"/>
</dbReference>
<sequence>MAHPVHVGLKEATSPFMEELIAFHDHTLMIIFLISSLVLYIISMMLTTKLTHTSTMNAQEIEIIWTILPAIILIMIALPSLRILYMTDEFNKPYLTLKAIGHQWYWSYEYSDYVDLAFDSYIMPTYFLEPGEFRLLEVDNRTTLPMEADIRMLISSQDVLHSWAVPSXGVKADAIPGRLNQAMLASMRPGLFYGQCSEICGSNHCFMPIVLEFSYFXDFETWASYLYIVSL</sequence>
<protein>
    <recommendedName>
        <fullName>Cytochrome c oxidase subunit 2</fullName>
        <ecNumber>7.1.1.9</ecNumber>
    </recommendedName>
    <alternativeName>
        <fullName>Cytochrome c oxidase polypeptide II</fullName>
    </alternativeName>
</protein>
<geneLocation type="mitochondrion"/>
<accession>Q9GCE7</accession>
<organism>
    <name type="scientific">Brachyteles hypoxanthus</name>
    <name type="common">Northern muriqui</name>
    <name type="synonym">Woolly spider monkey</name>
    <dbReference type="NCBI Taxonomy" id="342807"/>
    <lineage>
        <taxon>Eukaryota</taxon>
        <taxon>Metazoa</taxon>
        <taxon>Chordata</taxon>
        <taxon>Craniata</taxon>
        <taxon>Vertebrata</taxon>
        <taxon>Euteleostomi</taxon>
        <taxon>Mammalia</taxon>
        <taxon>Eutheria</taxon>
        <taxon>Euarchontoglires</taxon>
        <taxon>Primates</taxon>
        <taxon>Haplorrhini</taxon>
        <taxon>Platyrrhini</taxon>
        <taxon>Atelidae</taxon>
        <taxon>Atelinae</taxon>
        <taxon>Brachyteles</taxon>
    </lineage>
</organism>
<comment type="function">
    <text evidence="2">Component of the cytochrome c oxidase, the last enzyme in the mitochondrial electron transport chain which drives oxidative phosphorylation. The respiratory chain contains 3 multisubunit complexes succinate dehydrogenase (complex II, CII), ubiquinol-cytochrome c oxidoreductase (cytochrome b-c1 complex, complex III, CIII) and cytochrome c oxidase (complex IV, CIV), that cooperate to transfer electrons derived from NADH and succinate to molecular oxygen, creating an electrochemical gradient over the inner membrane that drives transmembrane transport and the ATP synthase. Cytochrome c oxidase is the component of the respiratory chain that catalyzes the reduction of oxygen to water. Electrons originating from reduced cytochrome c in the intermembrane space (IMS) are transferred via the dinuclear copper A center (CU(A)) of subunit 2 and heme A of subunit 1 to the active site in subunit 1, a binuclear center (BNC) formed by heme A3 and copper B (CU(B)). The BNC reduces molecular oxygen to 2 water molecules using 4 electrons from cytochrome c in the IMS and 4 protons from the mitochondrial matrix.</text>
</comment>
<comment type="catalytic activity">
    <reaction evidence="2">
        <text>4 Fe(II)-[cytochrome c] + O2 + 8 H(+)(in) = 4 Fe(III)-[cytochrome c] + 2 H2O + 4 H(+)(out)</text>
        <dbReference type="Rhea" id="RHEA:11436"/>
        <dbReference type="Rhea" id="RHEA-COMP:10350"/>
        <dbReference type="Rhea" id="RHEA-COMP:14399"/>
        <dbReference type="ChEBI" id="CHEBI:15377"/>
        <dbReference type="ChEBI" id="CHEBI:15378"/>
        <dbReference type="ChEBI" id="CHEBI:15379"/>
        <dbReference type="ChEBI" id="CHEBI:29033"/>
        <dbReference type="ChEBI" id="CHEBI:29034"/>
        <dbReference type="EC" id="7.1.1.9"/>
    </reaction>
    <physiologicalReaction direction="left-to-right" evidence="2">
        <dbReference type="Rhea" id="RHEA:11437"/>
    </physiologicalReaction>
</comment>
<comment type="cofactor">
    <cofactor evidence="3">
        <name>Cu cation</name>
        <dbReference type="ChEBI" id="CHEBI:23378"/>
    </cofactor>
    <text evidence="3">Binds a dinuclear copper A center per subunit.</text>
</comment>
<comment type="subunit">
    <text evidence="1 3">Component of the cytochrome c oxidase (complex IV, CIV), a multisubunit enzyme composed of 14 subunits. The complex is composed of a catalytic core of 3 subunits MT-CO1, MT-CO2 and MT-CO3, encoded in the mitochondrial DNA, and 11 supernumerary subunits COX4I, COX5A, COX5B, COX6A, COX6B, COX6C, COX7A, COX7B, COX7C, COX8 and NDUFA4, which are encoded in the nuclear genome. The complex exists as a monomer or a dimer and forms supercomplexes (SCs) in the inner mitochondrial membrane with NADH-ubiquinone oxidoreductase (complex I, CI) and ubiquinol-cytochrome c oxidoreductase (cytochrome b-c1 complex, complex III, CIII), resulting in different assemblies (supercomplex SCI(1)III(2)IV(1) and megacomplex MCI(2)III(2)IV(2)) (By similarity). Found in a complex with TMEM177, COA6, COX18, COX20, SCO1 and SCO2. Interacts with TMEM177 in a COX20-dependent manner. Interacts with COX20. Interacts with COX16 (By similarity).</text>
</comment>
<comment type="subcellular location">
    <subcellularLocation>
        <location evidence="3">Mitochondrion inner membrane</location>
        <topology evidence="3">Multi-pass membrane protein</topology>
    </subcellularLocation>
</comment>
<comment type="similarity">
    <text evidence="4">Belongs to the cytochrome c oxidase subunit 2 family.</text>
</comment>
<keyword id="KW-0186">Copper</keyword>
<keyword id="KW-0249">Electron transport</keyword>
<keyword id="KW-0460">Magnesium</keyword>
<keyword id="KW-0472">Membrane</keyword>
<keyword id="KW-0479">Metal-binding</keyword>
<keyword id="KW-0496">Mitochondrion</keyword>
<keyword id="KW-0999">Mitochondrion inner membrane</keyword>
<keyword id="KW-0679">Respiratory chain</keyword>
<keyword id="KW-1278">Translocase</keyword>
<keyword id="KW-0812">Transmembrane</keyword>
<keyword id="KW-1133">Transmembrane helix</keyword>
<keyword id="KW-0813">Transport</keyword>
<feature type="chain" id="PRO_0000227749" description="Cytochrome c oxidase subunit 2">
    <location>
        <begin position="1"/>
        <end position="231"/>
    </location>
</feature>
<feature type="topological domain" description="Mitochondrial intermembrane" evidence="3">
    <location>
        <begin position="1"/>
        <end position="14"/>
    </location>
</feature>
<feature type="transmembrane region" description="Helical; Name=I" evidence="3">
    <location>
        <begin position="15"/>
        <end position="45"/>
    </location>
</feature>
<feature type="topological domain" description="Mitochondrial matrix" evidence="3">
    <location>
        <begin position="46"/>
        <end position="59"/>
    </location>
</feature>
<feature type="transmembrane region" description="Helical; Name=II" evidence="3">
    <location>
        <begin position="60"/>
        <end position="87"/>
    </location>
</feature>
<feature type="topological domain" description="Mitochondrial intermembrane" evidence="3">
    <location>
        <begin position="88"/>
        <end position="231"/>
    </location>
</feature>
<feature type="binding site" evidence="3">
    <location>
        <position position="161"/>
    </location>
    <ligand>
        <name>Cu cation</name>
        <dbReference type="ChEBI" id="CHEBI:23378"/>
        <label>A1</label>
    </ligand>
</feature>
<feature type="binding site" evidence="3">
    <location>
        <position position="196"/>
    </location>
    <ligand>
        <name>Cu cation</name>
        <dbReference type="ChEBI" id="CHEBI:23378"/>
        <label>A1</label>
    </ligand>
</feature>
<feature type="binding site" evidence="3">
    <location>
        <position position="196"/>
    </location>
    <ligand>
        <name>Cu cation</name>
        <dbReference type="ChEBI" id="CHEBI:23378"/>
        <label>A2</label>
    </ligand>
</feature>
<feature type="binding site" evidence="3">
    <location>
        <position position="198"/>
    </location>
    <ligand>
        <name>Cu cation</name>
        <dbReference type="ChEBI" id="CHEBI:23378"/>
        <label>A2</label>
    </ligand>
</feature>
<feature type="binding site" evidence="3">
    <location>
        <position position="198"/>
    </location>
    <ligand>
        <name>Mg(2+)</name>
        <dbReference type="ChEBI" id="CHEBI:18420"/>
        <note>ligand shared with MT-CO1</note>
    </ligand>
</feature>
<feature type="binding site" evidence="3">
    <location>
        <position position="200"/>
    </location>
    <ligand>
        <name>Cu cation</name>
        <dbReference type="ChEBI" id="CHEBI:23378"/>
        <label>A1</label>
    </ligand>
</feature>
<feature type="binding site" evidence="3">
    <location>
        <position position="200"/>
    </location>
    <ligand>
        <name>Cu cation</name>
        <dbReference type="ChEBI" id="CHEBI:23378"/>
        <label>A2</label>
    </ligand>
</feature>
<feature type="binding site" evidence="3">
    <location>
        <position position="204"/>
    </location>
    <ligand>
        <name>Cu cation</name>
        <dbReference type="ChEBI" id="CHEBI:23378"/>
        <label>A2</label>
    </ligand>
</feature>
<feature type="binding site" evidence="3">
    <location>
        <position position="207"/>
    </location>
    <ligand>
        <name>Cu cation</name>
        <dbReference type="ChEBI" id="CHEBI:23378"/>
        <label>A1</label>
    </ligand>
</feature>
<reference key="1">
    <citation type="journal article" date="2000" name="Int. J. Primatol.">
        <title>Phylogenetic relationships of spider monkeys (Ateles) based on mitochondrial DNA sequence variation.</title>
        <authorList>
            <person name="Collins A.C."/>
            <person name="Dubach J.M."/>
        </authorList>
    </citation>
    <scope>NUCLEOTIDE SEQUENCE [GENOMIC DNA]</scope>
</reference>